<accession>Q68WD4</accession>
<protein>
    <recommendedName>
        <fullName evidence="1">Peptidyl-tRNA hydrolase</fullName>
        <shortName evidence="1">Pth</shortName>
        <ecNumber evidence="1">3.1.1.29</ecNumber>
    </recommendedName>
</protein>
<name>PTH_RICTY</name>
<dbReference type="EC" id="3.1.1.29" evidence="1"/>
<dbReference type="EMBL" id="AE017197">
    <property type="protein sequence ID" value="AAU04058.1"/>
    <property type="molecule type" value="Genomic_DNA"/>
</dbReference>
<dbReference type="RefSeq" id="WP_011191039.1">
    <property type="nucleotide sequence ID" value="NC_006142.1"/>
</dbReference>
<dbReference type="SMR" id="Q68WD4"/>
<dbReference type="KEGG" id="rty:RT0593"/>
<dbReference type="eggNOG" id="COG0193">
    <property type="taxonomic scope" value="Bacteria"/>
</dbReference>
<dbReference type="HOGENOM" id="CLU_062456_2_2_5"/>
<dbReference type="OrthoDB" id="9800507at2"/>
<dbReference type="Proteomes" id="UP000000604">
    <property type="component" value="Chromosome"/>
</dbReference>
<dbReference type="GO" id="GO:0005737">
    <property type="term" value="C:cytoplasm"/>
    <property type="evidence" value="ECO:0007669"/>
    <property type="project" value="UniProtKB-SubCell"/>
</dbReference>
<dbReference type="GO" id="GO:0004045">
    <property type="term" value="F:peptidyl-tRNA hydrolase activity"/>
    <property type="evidence" value="ECO:0007669"/>
    <property type="project" value="UniProtKB-UniRule"/>
</dbReference>
<dbReference type="GO" id="GO:0000049">
    <property type="term" value="F:tRNA binding"/>
    <property type="evidence" value="ECO:0007669"/>
    <property type="project" value="UniProtKB-UniRule"/>
</dbReference>
<dbReference type="GO" id="GO:0006515">
    <property type="term" value="P:protein quality control for misfolded or incompletely synthesized proteins"/>
    <property type="evidence" value="ECO:0007669"/>
    <property type="project" value="UniProtKB-UniRule"/>
</dbReference>
<dbReference type="GO" id="GO:0072344">
    <property type="term" value="P:rescue of stalled ribosome"/>
    <property type="evidence" value="ECO:0007669"/>
    <property type="project" value="UniProtKB-UniRule"/>
</dbReference>
<dbReference type="CDD" id="cd00462">
    <property type="entry name" value="PTH"/>
    <property type="match status" value="1"/>
</dbReference>
<dbReference type="FunFam" id="3.40.50.1470:FF:000001">
    <property type="entry name" value="Peptidyl-tRNA hydrolase"/>
    <property type="match status" value="1"/>
</dbReference>
<dbReference type="Gene3D" id="3.40.50.1470">
    <property type="entry name" value="Peptidyl-tRNA hydrolase"/>
    <property type="match status" value="1"/>
</dbReference>
<dbReference type="HAMAP" id="MF_00083">
    <property type="entry name" value="Pept_tRNA_hydro_bact"/>
    <property type="match status" value="1"/>
</dbReference>
<dbReference type="InterPro" id="IPR001328">
    <property type="entry name" value="Pept_tRNA_hydro"/>
</dbReference>
<dbReference type="InterPro" id="IPR018171">
    <property type="entry name" value="Pept_tRNA_hydro_CS"/>
</dbReference>
<dbReference type="InterPro" id="IPR036416">
    <property type="entry name" value="Pept_tRNA_hydro_sf"/>
</dbReference>
<dbReference type="NCBIfam" id="TIGR00447">
    <property type="entry name" value="pth"/>
    <property type="match status" value="1"/>
</dbReference>
<dbReference type="PANTHER" id="PTHR17224">
    <property type="entry name" value="PEPTIDYL-TRNA HYDROLASE"/>
    <property type="match status" value="1"/>
</dbReference>
<dbReference type="PANTHER" id="PTHR17224:SF1">
    <property type="entry name" value="PEPTIDYL-TRNA HYDROLASE"/>
    <property type="match status" value="1"/>
</dbReference>
<dbReference type="Pfam" id="PF01195">
    <property type="entry name" value="Pept_tRNA_hydro"/>
    <property type="match status" value="1"/>
</dbReference>
<dbReference type="SUPFAM" id="SSF53178">
    <property type="entry name" value="Peptidyl-tRNA hydrolase-like"/>
    <property type="match status" value="1"/>
</dbReference>
<dbReference type="PROSITE" id="PS01195">
    <property type="entry name" value="PEPT_TRNA_HYDROL_1"/>
    <property type="match status" value="1"/>
</dbReference>
<dbReference type="PROSITE" id="PS01196">
    <property type="entry name" value="PEPT_TRNA_HYDROL_2"/>
    <property type="match status" value="1"/>
</dbReference>
<comment type="function">
    <text evidence="1">Hydrolyzes ribosome-free peptidyl-tRNAs (with 1 or more amino acids incorporated), which drop off the ribosome during protein synthesis, or as a result of ribosome stalling.</text>
</comment>
<comment type="function">
    <text evidence="1">Catalyzes the release of premature peptidyl moieties from peptidyl-tRNA molecules trapped in stalled 50S ribosomal subunits, and thus maintains levels of free tRNAs and 50S ribosomes.</text>
</comment>
<comment type="catalytic activity">
    <reaction evidence="1">
        <text>an N-acyl-L-alpha-aminoacyl-tRNA + H2O = an N-acyl-L-amino acid + a tRNA + H(+)</text>
        <dbReference type="Rhea" id="RHEA:54448"/>
        <dbReference type="Rhea" id="RHEA-COMP:10123"/>
        <dbReference type="Rhea" id="RHEA-COMP:13883"/>
        <dbReference type="ChEBI" id="CHEBI:15377"/>
        <dbReference type="ChEBI" id="CHEBI:15378"/>
        <dbReference type="ChEBI" id="CHEBI:59874"/>
        <dbReference type="ChEBI" id="CHEBI:78442"/>
        <dbReference type="ChEBI" id="CHEBI:138191"/>
        <dbReference type="EC" id="3.1.1.29"/>
    </reaction>
</comment>
<comment type="subunit">
    <text evidence="1">Monomer.</text>
</comment>
<comment type="subcellular location">
    <subcellularLocation>
        <location evidence="1">Cytoplasm</location>
    </subcellularLocation>
</comment>
<comment type="similarity">
    <text evidence="1">Belongs to the PTH family.</text>
</comment>
<gene>
    <name evidence="1" type="primary">pth</name>
    <name type="ordered locus">RT0593</name>
</gene>
<sequence length="185" mass="21000">MILVIGLGNPGIVYQYTRHNIGFIAIERIANKYHLSFSTKQKFNCKIAEAIIDRQKICFIKPTTYMNLSGKSVILVKTYYNINYEKVFVIHDDIDLEIGRIKFKTGGSNGGHNGLKSIDSIIGSHYNRIRIGIGRPQNNHDVADYVLSNFSESEYKTVMQSIDNVANNFGLILEHKLAEFKNKIV</sequence>
<organism>
    <name type="scientific">Rickettsia typhi (strain ATCC VR-144 / Wilmington)</name>
    <dbReference type="NCBI Taxonomy" id="257363"/>
    <lineage>
        <taxon>Bacteria</taxon>
        <taxon>Pseudomonadati</taxon>
        <taxon>Pseudomonadota</taxon>
        <taxon>Alphaproteobacteria</taxon>
        <taxon>Rickettsiales</taxon>
        <taxon>Rickettsiaceae</taxon>
        <taxon>Rickettsieae</taxon>
        <taxon>Rickettsia</taxon>
        <taxon>typhus group</taxon>
    </lineage>
</organism>
<evidence type="ECO:0000255" key="1">
    <source>
        <dbReference type="HAMAP-Rule" id="MF_00083"/>
    </source>
</evidence>
<reference key="1">
    <citation type="journal article" date="2004" name="J. Bacteriol.">
        <title>Complete genome sequence of Rickettsia typhi and comparison with sequences of other Rickettsiae.</title>
        <authorList>
            <person name="McLeod M.P."/>
            <person name="Qin X."/>
            <person name="Karpathy S.E."/>
            <person name="Gioia J."/>
            <person name="Highlander S.K."/>
            <person name="Fox G.E."/>
            <person name="McNeill T.Z."/>
            <person name="Jiang H."/>
            <person name="Muzny D."/>
            <person name="Jacob L.S."/>
            <person name="Hawes A.C."/>
            <person name="Sodergren E."/>
            <person name="Gill R."/>
            <person name="Hume J."/>
            <person name="Morgan M."/>
            <person name="Fan G."/>
            <person name="Amin A.G."/>
            <person name="Gibbs R.A."/>
            <person name="Hong C."/>
            <person name="Yu X.-J."/>
            <person name="Walker D.H."/>
            <person name="Weinstock G.M."/>
        </authorList>
    </citation>
    <scope>NUCLEOTIDE SEQUENCE [LARGE SCALE GENOMIC DNA]</scope>
    <source>
        <strain>ATCC VR-144 / Wilmington</strain>
    </source>
</reference>
<keyword id="KW-0963">Cytoplasm</keyword>
<keyword id="KW-0378">Hydrolase</keyword>
<keyword id="KW-0694">RNA-binding</keyword>
<keyword id="KW-0820">tRNA-binding</keyword>
<feature type="chain" id="PRO_0000187806" description="Peptidyl-tRNA hydrolase">
    <location>
        <begin position="1"/>
        <end position="185"/>
    </location>
</feature>
<feature type="active site" description="Proton acceptor" evidence="1">
    <location>
        <position position="19"/>
    </location>
</feature>
<feature type="binding site" evidence="1">
    <location>
        <position position="14"/>
    </location>
    <ligand>
        <name>tRNA</name>
        <dbReference type="ChEBI" id="CHEBI:17843"/>
    </ligand>
</feature>
<feature type="binding site" evidence="1">
    <location>
        <position position="65"/>
    </location>
    <ligand>
        <name>tRNA</name>
        <dbReference type="ChEBI" id="CHEBI:17843"/>
    </ligand>
</feature>
<feature type="binding site" evidence="1">
    <location>
        <position position="67"/>
    </location>
    <ligand>
        <name>tRNA</name>
        <dbReference type="ChEBI" id="CHEBI:17843"/>
    </ligand>
</feature>
<feature type="binding site" evidence="1">
    <location>
        <position position="113"/>
    </location>
    <ligand>
        <name>tRNA</name>
        <dbReference type="ChEBI" id="CHEBI:17843"/>
    </ligand>
</feature>
<feature type="site" description="Discriminates between blocked and unblocked aminoacyl-tRNA" evidence="1">
    <location>
        <position position="9"/>
    </location>
</feature>
<feature type="site" description="Stabilizes the basic form of H active site to accept a proton" evidence="1">
    <location>
        <position position="92"/>
    </location>
</feature>
<proteinExistence type="inferred from homology"/>